<feature type="chain" id="PRO_0000320817" description="Protein translocase subunit SecA">
    <location>
        <begin position="1"/>
        <end position="906"/>
    </location>
</feature>
<feature type="region of interest" description="Disordered" evidence="2">
    <location>
        <begin position="852"/>
        <end position="906"/>
    </location>
</feature>
<feature type="compositionally biased region" description="Basic and acidic residues" evidence="2">
    <location>
        <begin position="852"/>
        <end position="888"/>
    </location>
</feature>
<feature type="compositionally biased region" description="Basic residues" evidence="2">
    <location>
        <begin position="896"/>
        <end position="906"/>
    </location>
</feature>
<feature type="binding site" evidence="1">
    <location>
        <position position="86"/>
    </location>
    <ligand>
        <name>ATP</name>
        <dbReference type="ChEBI" id="CHEBI:30616"/>
    </ligand>
</feature>
<feature type="binding site" evidence="1">
    <location>
        <begin position="104"/>
        <end position="108"/>
    </location>
    <ligand>
        <name>ATP</name>
        <dbReference type="ChEBI" id="CHEBI:30616"/>
    </ligand>
</feature>
<feature type="binding site" evidence="1">
    <location>
        <position position="511"/>
    </location>
    <ligand>
        <name>ATP</name>
        <dbReference type="ChEBI" id="CHEBI:30616"/>
    </ligand>
</feature>
<feature type="binding site" evidence="1">
    <location>
        <position position="890"/>
    </location>
    <ligand>
        <name>Zn(2+)</name>
        <dbReference type="ChEBI" id="CHEBI:29105"/>
    </ligand>
</feature>
<feature type="binding site" evidence="1">
    <location>
        <position position="892"/>
    </location>
    <ligand>
        <name>Zn(2+)</name>
        <dbReference type="ChEBI" id="CHEBI:29105"/>
    </ligand>
</feature>
<feature type="binding site" evidence="1">
    <location>
        <position position="901"/>
    </location>
    <ligand>
        <name>Zn(2+)</name>
        <dbReference type="ChEBI" id="CHEBI:29105"/>
    </ligand>
</feature>
<feature type="binding site" evidence="1">
    <location>
        <position position="902"/>
    </location>
    <ligand>
        <name>Zn(2+)</name>
        <dbReference type="ChEBI" id="CHEBI:29105"/>
    </ligand>
</feature>
<evidence type="ECO:0000255" key="1">
    <source>
        <dbReference type="HAMAP-Rule" id="MF_01382"/>
    </source>
</evidence>
<evidence type="ECO:0000256" key="2">
    <source>
        <dbReference type="SAM" id="MobiDB-lite"/>
    </source>
</evidence>
<sequence length="906" mass="103796">MLSLVQKIIGSRNERFIKKVSRIVQKINSLEPEFEKLSDEQLKAKTFEYRERLANGEILDNLLPEAFATVREAGKRTKNMRHYDVQLIGGIVLHQGKVAEMRTGEGKTLVATLPAYLNALTGDGVHVITVNDYLAKRDAELMSDIYEFLGMSVGVIVADLNPQQRKEAYACDITYGTNNEFGFDYLRDNMAYEKEQQVQRSRNYVIIDEVDSILIDEARTPLIISGASDDRSEMYNLFNRLVPYLEKQEKEEVENEQEQRDFYVDEKSKNAYLTEKGYAKIENMLKKEGILEEDDNLYSPHNITKMHYLNACLRAHSLYQLNIDYIVRDQEIVIIDESTGRAMPGRRWSDGLHQAIEAKEGVKINAENQTMASITFQNFFKLYNKIAGMTGTADTEAFELHSIYGLEVIIIPTNKPMIRKDHHDEIYGSVREKFDAIVEDIKERISKGQPVLVGTASIEASEVLSTLLKKKKIRHNVLNAKQHEKEASIIAMAGYPDNVTIATNMAGRGTDIILGGNLEVEIAQLEDPTPEDIAQIKAEWLKRNEAVKKAGGLCIIGSERHDSRRIDNQLRGRAARQGDPGESKFYLSMDDNLLRIFASQRMAERVKKGLKGGESLAFGFMSKVISKAQGKVESYHFDIRKNLLEYDNVVNTQRKVIYEQRQSFLEAEDVSDILADIRIDVAEQLFHDYVPAGSMHELWDLEGLEKALKSDFMIELDLQKLYEEDDSLGEEDLKRLVREAIEIEFVEKTKNLDSGAVRQFEKFSLLQSLDTHWREHLSSIDHLRNSINLRGYAQKDPKNEYKKEAFELFSTMLDNFKYEVISSLAKIRIATEEETQRAQQEWQESMSDIKAEHESVIDNNQRHDEDEQEEAPKVKQVRREGPKVKRNDPCPCGSGKKYKQCHSKVE</sequence>
<protein>
    <recommendedName>
        <fullName evidence="1">Protein translocase subunit SecA</fullName>
        <ecNumber evidence="1">7.4.2.8</ecNumber>
    </recommendedName>
</protein>
<keyword id="KW-0067">ATP-binding</keyword>
<keyword id="KW-0997">Cell inner membrane</keyword>
<keyword id="KW-1003">Cell membrane</keyword>
<keyword id="KW-0963">Cytoplasm</keyword>
<keyword id="KW-0472">Membrane</keyword>
<keyword id="KW-0479">Metal-binding</keyword>
<keyword id="KW-0547">Nucleotide-binding</keyword>
<keyword id="KW-0653">Protein transport</keyword>
<keyword id="KW-1185">Reference proteome</keyword>
<keyword id="KW-1278">Translocase</keyword>
<keyword id="KW-0811">Translocation</keyword>
<keyword id="KW-0813">Transport</keyword>
<keyword id="KW-0862">Zinc</keyword>
<comment type="function">
    <text evidence="1">Part of the Sec protein translocase complex. Interacts with the SecYEG preprotein conducting channel. Has a central role in coupling the hydrolysis of ATP to the transfer of proteins into and across the cell membrane, serving both as a receptor for the preprotein-SecB complex and as an ATP-driven molecular motor driving the stepwise translocation of polypeptide chains across the membrane.</text>
</comment>
<comment type="catalytic activity">
    <reaction evidence="1">
        <text>ATP + H2O + cellular proteinSide 1 = ADP + phosphate + cellular proteinSide 2.</text>
        <dbReference type="EC" id="7.4.2.8"/>
    </reaction>
</comment>
<comment type="cofactor">
    <cofactor evidence="1">
        <name>Zn(2+)</name>
        <dbReference type="ChEBI" id="CHEBI:29105"/>
    </cofactor>
    <text evidence="1">May bind 1 zinc ion per subunit.</text>
</comment>
<comment type="subunit">
    <text evidence="1">Monomer and homodimer. Part of the essential Sec protein translocation apparatus which comprises SecA, SecYEG and auxiliary proteins SecDF-YajC and YidC.</text>
</comment>
<comment type="subcellular location">
    <subcellularLocation>
        <location evidence="1">Cell inner membrane</location>
        <topology evidence="1">Peripheral membrane protein</topology>
        <orientation evidence="1">Cytoplasmic side</orientation>
    </subcellularLocation>
    <subcellularLocation>
        <location evidence="1">Cytoplasm</location>
    </subcellularLocation>
    <text evidence="1">Distribution is 50-50.</text>
</comment>
<comment type="similarity">
    <text evidence="1">Belongs to the SecA family.</text>
</comment>
<organism>
    <name type="scientific">Francisella tularensis subsp. tularensis (strain SCHU S4 / Schu 4)</name>
    <dbReference type="NCBI Taxonomy" id="177416"/>
    <lineage>
        <taxon>Bacteria</taxon>
        <taxon>Pseudomonadati</taxon>
        <taxon>Pseudomonadota</taxon>
        <taxon>Gammaproteobacteria</taxon>
        <taxon>Thiotrichales</taxon>
        <taxon>Francisellaceae</taxon>
        <taxon>Francisella</taxon>
    </lineage>
</organism>
<proteinExistence type="inferred from homology"/>
<dbReference type="EC" id="7.4.2.8" evidence="1"/>
<dbReference type="EMBL" id="AJ749949">
    <property type="protein sequence ID" value="CAG45402.1"/>
    <property type="molecule type" value="Genomic_DNA"/>
</dbReference>
<dbReference type="RefSeq" id="WP_011242256.1">
    <property type="nucleotide sequence ID" value="NZ_CP010290.1"/>
</dbReference>
<dbReference type="RefSeq" id="YP_169779.1">
    <property type="nucleotide sequence ID" value="NC_006570.2"/>
</dbReference>
<dbReference type="SMR" id="Q5NGR3"/>
<dbReference type="IntAct" id="Q5NGR3">
    <property type="interactions" value="6"/>
</dbReference>
<dbReference type="STRING" id="177416.FTT_0769"/>
<dbReference type="DNASU" id="3192077"/>
<dbReference type="EnsemblBacteria" id="CAG45402">
    <property type="protein sequence ID" value="CAG45402"/>
    <property type="gene ID" value="FTT_0769"/>
</dbReference>
<dbReference type="KEGG" id="ftu:FTT_0769"/>
<dbReference type="eggNOG" id="COG0653">
    <property type="taxonomic scope" value="Bacteria"/>
</dbReference>
<dbReference type="OrthoDB" id="9805579at2"/>
<dbReference type="Proteomes" id="UP000001174">
    <property type="component" value="Chromosome"/>
</dbReference>
<dbReference type="GO" id="GO:0031522">
    <property type="term" value="C:cell envelope Sec protein transport complex"/>
    <property type="evidence" value="ECO:0007669"/>
    <property type="project" value="TreeGrafter"/>
</dbReference>
<dbReference type="GO" id="GO:0005829">
    <property type="term" value="C:cytosol"/>
    <property type="evidence" value="ECO:0007669"/>
    <property type="project" value="TreeGrafter"/>
</dbReference>
<dbReference type="GO" id="GO:0005886">
    <property type="term" value="C:plasma membrane"/>
    <property type="evidence" value="ECO:0007669"/>
    <property type="project" value="UniProtKB-SubCell"/>
</dbReference>
<dbReference type="GO" id="GO:0005524">
    <property type="term" value="F:ATP binding"/>
    <property type="evidence" value="ECO:0007669"/>
    <property type="project" value="UniProtKB-UniRule"/>
</dbReference>
<dbReference type="GO" id="GO:0046872">
    <property type="term" value="F:metal ion binding"/>
    <property type="evidence" value="ECO:0007669"/>
    <property type="project" value="UniProtKB-KW"/>
</dbReference>
<dbReference type="GO" id="GO:0008564">
    <property type="term" value="F:protein-exporting ATPase activity"/>
    <property type="evidence" value="ECO:0007669"/>
    <property type="project" value="UniProtKB-EC"/>
</dbReference>
<dbReference type="GO" id="GO:0065002">
    <property type="term" value="P:intracellular protein transmembrane transport"/>
    <property type="evidence" value="ECO:0007669"/>
    <property type="project" value="UniProtKB-UniRule"/>
</dbReference>
<dbReference type="GO" id="GO:0017038">
    <property type="term" value="P:protein import"/>
    <property type="evidence" value="ECO:0007669"/>
    <property type="project" value="InterPro"/>
</dbReference>
<dbReference type="GO" id="GO:0006605">
    <property type="term" value="P:protein targeting"/>
    <property type="evidence" value="ECO:0007669"/>
    <property type="project" value="UniProtKB-UniRule"/>
</dbReference>
<dbReference type="GO" id="GO:0043952">
    <property type="term" value="P:protein transport by the Sec complex"/>
    <property type="evidence" value="ECO:0007669"/>
    <property type="project" value="TreeGrafter"/>
</dbReference>
<dbReference type="CDD" id="cd17928">
    <property type="entry name" value="DEXDc_SecA"/>
    <property type="match status" value="1"/>
</dbReference>
<dbReference type="CDD" id="cd18803">
    <property type="entry name" value="SF2_C_secA"/>
    <property type="match status" value="1"/>
</dbReference>
<dbReference type="FunFam" id="3.40.50.300:FF:000113">
    <property type="entry name" value="Preprotein translocase subunit SecA"/>
    <property type="match status" value="1"/>
</dbReference>
<dbReference type="FunFam" id="3.90.1440.10:FF:000001">
    <property type="entry name" value="Preprotein translocase subunit SecA"/>
    <property type="match status" value="1"/>
</dbReference>
<dbReference type="FunFam" id="1.10.3060.10:FF:000003">
    <property type="entry name" value="Protein translocase subunit SecA"/>
    <property type="match status" value="1"/>
</dbReference>
<dbReference type="FunFam" id="3.40.50.300:FF:000334">
    <property type="entry name" value="Protein translocase subunit SecA"/>
    <property type="match status" value="1"/>
</dbReference>
<dbReference type="Gene3D" id="1.10.3060.10">
    <property type="entry name" value="Helical scaffold and wing domains of SecA"/>
    <property type="match status" value="1"/>
</dbReference>
<dbReference type="Gene3D" id="3.40.50.300">
    <property type="entry name" value="P-loop containing nucleotide triphosphate hydrolases"/>
    <property type="match status" value="2"/>
</dbReference>
<dbReference type="Gene3D" id="3.90.1440.10">
    <property type="entry name" value="SecA, preprotein cross-linking domain"/>
    <property type="match status" value="1"/>
</dbReference>
<dbReference type="HAMAP" id="MF_01382">
    <property type="entry name" value="SecA"/>
    <property type="match status" value="1"/>
</dbReference>
<dbReference type="InterPro" id="IPR014001">
    <property type="entry name" value="Helicase_ATP-bd"/>
</dbReference>
<dbReference type="InterPro" id="IPR001650">
    <property type="entry name" value="Helicase_C-like"/>
</dbReference>
<dbReference type="InterPro" id="IPR027417">
    <property type="entry name" value="P-loop_NTPase"/>
</dbReference>
<dbReference type="InterPro" id="IPR004027">
    <property type="entry name" value="SEC_C_motif"/>
</dbReference>
<dbReference type="InterPro" id="IPR000185">
    <property type="entry name" value="SecA"/>
</dbReference>
<dbReference type="InterPro" id="IPR020937">
    <property type="entry name" value="SecA_CS"/>
</dbReference>
<dbReference type="InterPro" id="IPR011115">
    <property type="entry name" value="SecA_DEAD"/>
</dbReference>
<dbReference type="InterPro" id="IPR014018">
    <property type="entry name" value="SecA_motor_DEAD"/>
</dbReference>
<dbReference type="InterPro" id="IPR011130">
    <property type="entry name" value="SecA_preprotein_X-link_dom"/>
</dbReference>
<dbReference type="InterPro" id="IPR044722">
    <property type="entry name" value="SecA_SF2_C"/>
</dbReference>
<dbReference type="InterPro" id="IPR011116">
    <property type="entry name" value="SecA_Wing/Scaffold"/>
</dbReference>
<dbReference type="InterPro" id="IPR036266">
    <property type="entry name" value="SecA_Wing/Scaffold_sf"/>
</dbReference>
<dbReference type="InterPro" id="IPR036670">
    <property type="entry name" value="SecA_X-link_sf"/>
</dbReference>
<dbReference type="NCBIfam" id="NF009538">
    <property type="entry name" value="PRK12904.1"/>
    <property type="match status" value="1"/>
</dbReference>
<dbReference type="NCBIfam" id="TIGR00963">
    <property type="entry name" value="secA"/>
    <property type="match status" value="1"/>
</dbReference>
<dbReference type="PANTHER" id="PTHR30612:SF0">
    <property type="entry name" value="CHLOROPLAST PROTEIN-TRANSPORTING ATPASE"/>
    <property type="match status" value="1"/>
</dbReference>
<dbReference type="PANTHER" id="PTHR30612">
    <property type="entry name" value="SECA INNER MEMBRANE COMPONENT OF SEC PROTEIN SECRETION SYSTEM"/>
    <property type="match status" value="1"/>
</dbReference>
<dbReference type="Pfam" id="PF21090">
    <property type="entry name" value="P-loop_SecA"/>
    <property type="match status" value="1"/>
</dbReference>
<dbReference type="Pfam" id="PF02810">
    <property type="entry name" value="SEC-C"/>
    <property type="match status" value="1"/>
</dbReference>
<dbReference type="Pfam" id="PF07517">
    <property type="entry name" value="SecA_DEAD"/>
    <property type="match status" value="1"/>
</dbReference>
<dbReference type="Pfam" id="PF01043">
    <property type="entry name" value="SecA_PP_bind"/>
    <property type="match status" value="1"/>
</dbReference>
<dbReference type="Pfam" id="PF07516">
    <property type="entry name" value="SecA_SW"/>
    <property type="match status" value="1"/>
</dbReference>
<dbReference type="PRINTS" id="PR00906">
    <property type="entry name" value="SECA"/>
</dbReference>
<dbReference type="SMART" id="SM00957">
    <property type="entry name" value="SecA_DEAD"/>
    <property type="match status" value="1"/>
</dbReference>
<dbReference type="SMART" id="SM00958">
    <property type="entry name" value="SecA_PP_bind"/>
    <property type="match status" value="1"/>
</dbReference>
<dbReference type="SUPFAM" id="SSF81886">
    <property type="entry name" value="Helical scaffold and wing domains of SecA"/>
    <property type="match status" value="1"/>
</dbReference>
<dbReference type="SUPFAM" id="SSF52540">
    <property type="entry name" value="P-loop containing nucleoside triphosphate hydrolases"/>
    <property type="match status" value="2"/>
</dbReference>
<dbReference type="SUPFAM" id="SSF81767">
    <property type="entry name" value="Pre-protein crosslinking domain of SecA"/>
    <property type="match status" value="1"/>
</dbReference>
<dbReference type="PROSITE" id="PS01312">
    <property type="entry name" value="SECA"/>
    <property type="match status" value="1"/>
</dbReference>
<dbReference type="PROSITE" id="PS51196">
    <property type="entry name" value="SECA_MOTOR_DEAD"/>
    <property type="match status" value="1"/>
</dbReference>
<name>SECA_FRATT</name>
<gene>
    <name evidence="1" type="primary">secA</name>
    <name type="ordered locus">FTT_0769</name>
</gene>
<accession>Q5NGR3</accession>
<reference key="1">
    <citation type="journal article" date="2005" name="Nat. Genet.">
        <title>The complete genome sequence of Francisella tularensis, the causative agent of tularemia.</title>
        <authorList>
            <person name="Larsson P."/>
            <person name="Oyston P.C.F."/>
            <person name="Chain P."/>
            <person name="Chu M.C."/>
            <person name="Duffield M."/>
            <person name="Fuxelius H.-H."/>
            <person name="Garcia E."/>
            <person name="Haelltorp G."/>
            <person name="Johansson D."/>
            <person name="Isherwood K.E."/>
            <person name="Karp P.D."/>
            <person name="Larsson E."/>
            <person name="Liu Y."/>
            <person name="Michell S."/>
            <person name="Prior J."/>
            <person name="Prior R."/>
            <person name="Malfatti S."/>
            <person name="Sjoestedt A."/>
            <person name="Svensson K."/>
            <person name="Thompson N."/>
            <person name="Vergez L."/>
            <person name="Wagg J.K."/>
            <person name="Wren B.W."/>
            <person name="Lindler L.E."/>
            <person name="Andersson S.G.E."/>
            <person name="Forsman M."/>
            <person name="Titball R.W."/>
        </authorList>
    </citation>
    <scope>NUCLEOTIDE SEQUENCE [LARGE SCALE GENOMIC DNA]</scope>
    <source>
        <strain>SCHU S4 / Schu 4</strain>
    </source>
</reference>